<evidence type="ECO:0000255" key="1">
    <source>
        <dbReference type="HAMAP-Rule" id="MF_00178"/>
    </source>
</evidence>
<organism>
    <name type="scientific">Salmonella agona (strain SL483)</name>
    <dbReference type="NCBI Taxonomy" id="454166"/>
    <lineage>
        <taxon>Bacteria</taxon>
        <taxon>Pseudomonadati</taxon>
        <taxon>Pseudomonadota</taxon>
        <taxon>Gammaproteobacteria</taxon>
        <taxon>Enterobacterales</taxon>
        <taxon>Enterobacteriaceae</taxon>
        <taxon>Salmonella</taxon>
    </lineage>
</organism>
<keyword id="KW-0686">Riboflavin biosynthesis</keyword>
<keyword id="KW-0808">Transferase</keyword>
<feature type="chain" id="PRO_1000098221" description="6,7-dimethyl-8-ribityllumazine synthase">
    <location>
        <begin position="1"/>
        <end position="156"/>
    </location>
</feature>
<feature type="active site" description="Proton donor" evidence="1">
    <location>
        <position position="89"/>
    </location>
</feature>
<feature type="binding site" evidence="1">
    <location>
        <position position="22"/>
    </location>
    <ligand>
        <name>5-amino-6-(D-ribitylamino)uracil</name>
        <dbReference type="ChEBI" id="CHEBI:15934"/>
    </ligand>
</feature>
<feature type="binding site" evidence="1">
    <location>
        <begin position="57"/>
        <end position="59"/>
    </location>
    <ligand>
        <name>5-amino-6-(D-ribitylamino)uracil</name>
        <dbReference type="ChEBI" id="CHEBI:15934"/>
    </ligand>
</feature>
<feature type="binding site" evidence="1">
    <location>
        <begin position="81"/>
        <end position="83"/>
    </location>
    <ligand>
        <name>5-amino-6-(D-ribitylamino)uracil</name>
        <dbReference type="ChEBI" id="CHEBI:15934"/>
    </ligand>
</feature>
<feature type="binding site" evidence="1">
    <location>
        <begin position="86"/>
        <end position="87"/>
    </location>
    <ligand>
        <name>(2S)-2-hydroxy-3-oxobutyl phosphate</name>
        <dbReference type="ChEBI" id="CHEBI:58830"/>
    </ligand>
</feature>
<feature type="binding site" evidence="1">
    <location>
        <position position="114"/>
    </location>
    <ligand>
        <name>5-amino-6-(D-ribitylamino)uracil</name>
        <dbReference type="ChEBI" id="CHEBI:15934"/>
    </ligand>
</feature>
<feature type="binding site" evidence="1">
    <location>
        <position position="128"/>
    </location>
    <ligand>
        <name>(2S)-2-hydroxy-3-oxobutyl phosphate</name>
        <dbReference type="ChEBI" id="CHEBI:58830"/>
    </ligand>
</feature>
<name>RISB_SALA4</name>
<reference key="1">
    <citation type="journal article" date="2011" name="J. Bacteriol.">
        <title>Comparative genomics of 28 Salmonella enterica isolates: evidence for CRISPR-mediated adaptive sublineage evolution.</title>
        <authorList>
            <person name="Fricke W.F."/>
            <person name="Mammel M.K."/>
            <person name="McDermott P.F."/>
            <person name="Tartera C."/>
            <person name="White D.G."/>
            <person name="Leclerc J.E."/>
            <person name="Ravel J."/>
            <person name="Cebula T.A."/>
        </authorList>
    </citation>
    <scope>NUCLEOTIDE SEQUENCE [LARGE SCALE GENOMIC DNA]</scope>
    <source>
        <strain>SL483</strain>
    </source>
</reference>
<comment type="function">
    <text evidence="1">Catalyzes the formation of 6,7-dimethyl-8-ribityllumazine by condensation of 5-amino-6-(D-ribitylamino)uracil with 3,4-dihydroxy-2-butanone 4-phosphate. This is the penultimate step in the biosynthesis of riboflavin.</text>
</comment>
<comment type="catalytic activity">
    <reaction evidence="1">
        <text>(2S)-2-hydroxy-3-oxobutyl phosphate + 5-amino-6-(D-ribitylamino)uracil = 6,7-dimethyl-8-(1-D-ribityl)lumazine + phosphate + 2 H2O + H(+)</text>
        <dbReference type="Rhea" id="RHEA:26152"/>
        <dbReference type="ChEBI" id="CHEBI:15377"/>
        <dbReference type="ChEBI" id="CHEBI:15378"/>
        <dbReference type="ChEBI" id="CHEBI:15934"/>
        <dbReference type="ChEBI" id="CHEBI:43474"/>
        <dbReference type="ChEBI" id="CHEBI:58201"/>
        <dbReference type="ChEBI" id="CHEBI:58830"/>
        <dbReference type="EC" id="2.5.1.78"/>
    </reaction>
</comment>
<comment type="pathway">
    <text evidence="1">Cofactor biosynthesis; riboflavin biosynthesis; riboflavin from 2-hydroxy-3-oxobutyl phosphate and 5-amino-6-(D-ribitylamino)uracil: step 1/2.</text>
</comment>
<comment type="subunit">
    <text evidence="1">Forms an icosahedral capsid composed of 60 subunits, arranged as a dodecamer of pentamers.</text>
</comment>
<comment type="similarity">
    <text evidence="1">Belongs to the DMRL synthase family.</text>
</comment>
<sequence>MNIIKANVAAPDARVAITIARFNQFINDSLLDGAVDALTRIGQVKDDNITVVWVPGAYELPLATEALAKSGKYDAVVALGTVIRGGTAHFEYVAGGASNGLASVAQDSGVPVAFGVLTTESIEQAIERAGTKAGNKGAEAALTALEMINVLKAIKA</sequence>
<proteinExistence type="inferred from homology"/>
<protein>
    <recommendedName>
        <fullName evidence="1">6,7-dimethyl-8-ribityllumazine synthase</fullName>
        <shortName evidence="1">DMRL synthase</shortName>
        <shortName evidence="1">LS</shortName>
        <shortName evidence="1">Lumazine synthase</shortName>
        <ecNumber evidence="1">2.5.1.78</ecNumber>
    </recommendedName>
</protein>
<dbReference type="EC" id="2.5.1.78" evidence="1"/>
<dbReference type="EMBL" id="CP001138">
    <property type="protein sequence ID" value="ACH49604.1"/>
    <property type="molecule type" value="Genomic_DNA"/>
</dbReference>
<dbReference type="SMR" id="B5EXF8"/>
<dbReference type="KEGG" id="sea:SeAg_B0456"/>
<dbReference type="HOGENOM" id="CLU_089358_1_1_6"/>
<dbReference type="UniPathway" id="UPA00275">
    <property type="reaction ID" value="UER00404"/>
</dbReference>
<dbReference type="Proteomes" id="UP000008819">
    <property type="component" value="Chromosome"/>
</dbReference>
<dbReference type="GO" id="GO:0005829">
    <property type="term" value="C:cytosol"/>
    <property type="evidence" value="ECO:0007669"/>
    <property type="project" value="TreeGrafter"/>
</dbReference>
<dbReference type="GO" id="GO:0009349">
    <property type="term" value="C:riboflavin synthase complex"/>
    <property type="evidence" value="ECO:0007669"/>
    <property type="project" value="InterPro"/>
</dbReference>
<dbReference type="GO" id="GO:0000906">
    <property type="term" value="F:6,7-dimethyl-8-ribityllumazine synthase activity"/>
    <property type="evidence" value="ECO:0007669"/>
    <property type="project" value="UniProtKB-UniRule"/>
</dbReference>
<dbReference type="GO" id="GO:0009231">
    <property type="term" value="P:riboflavin biosynthetic process"/>
    <property type="evidence" value="ECO:0007669"/>
    <property type="project" value="UniProtKB-UniRule"/>
</dbReference>
<dbReference type="CDD" id="cd09209">
    <property type="entry name" value="Lumazine_synthase-I"/>
    <property type="match status" value="1"/>
</dbReference>
<dbReference type="FunFam" id="3.40.50.960:FF:000001">
    <property type="entry name" value="6,7-dimethyl-8-ribityllumazine synthase"/>
    <property type="match status" value="1"/>
</dbReference>
<dbReference type="Gene3D" id="3.40.50.960">
    <property type="entry name" value="Lumazine/riboflavin synthase"/>
    <property type="match status" value="1"/>
</dbReference>
<dbReference type="HAMAP" id="MF_00178">
    <property type="entry name" value="Lumazine_synth"/>
    <property type="match status" value="1"/>
</dbReference>
<dbReference type="InterPro" id="IPR034964">
    <property type="entry name" value="LS"/>
</dbReference>
<dbReference type="InterPro" id="IPR002180">
    <property type="entry name" value="LS/RS"/>
</dbReference>
<dbReference type="InterPro" id="IPR036467">
    <property type="entry name" value="LS/RS_sf"/>
</dbReference>
<dbReference type="NCBIfam" id="TIGR00114">
    <property type="entry name" value="lumazine-synth"/>
    <property type="match status" value="1"/>
</dbReference>
<dbReference type="NCBIfam" id="NF000812">
    <property type="entry name" value="PRK00061.1-4"/>
    <property type="match status" value="1"/>
</dbReference>
<dbReference type="PANTHER" id="PTHR21058:SF0">
    <property type="entry name" value="6,7-DIMETHYL-8-RIBITYLLUMAZINE SYNTHASE"/>
    <property type="match status" value="1"/>
</dbReference>
<dbReference type="PANTHER" id="PTHR21058">
    <property type="entry name" value="6,7-DIMETHYL-8-RIBITYLLUMAZINE SYNTHASE DMRL SYNTHASE LUMAZINE SYNTHASE"/>
    <property type="match status" value="1"/>
</dbReference>
<dbReference type="Pfam" id="PF00885">
    <property type="entry name" value="DMRL_synthase"/>
    <property type="match status" value="1"/>
</dbReference>
<dbReference type="SUPFAM" id="SSF52121">
    <property type="entry name" value="Lumazine synthase"/>
    <property type="match status" value="1"/>
</dbReference>
<gene>
    <name evidence="1" type="primary">ribH</name>
    <name type="ordered locus">SeAg_B0456</name>
</gene>
<accession>B5EXF8</accession>